<sequence>MGSTSSLYAAIDLGSNSFHMLVVREVAGSIQTLTRIKRKVRLAAGLNSENALSNEAMERGWQCLRLFAERLQDIPPSQIRVVATATLRLAVNAGDFIAKAQEILGCPVQVISGEEEARLIYQGVAHTTGGADQRLVVDIGGASTELVTGTGAQTTSLFSLSMGCVTWLERYFADRNLGQENFDAAEKAAREVLRPVADELRYHGWKVCVGASGTVQALQEIMMAQGMDERITLEKLQQLKQRAIHCGRLEELEIDGLTLERALVFPSGLAILIAIFTELNIQCMTLAGGALREGLVYGMLHLTVEQDIRSRTLRNIQRRFMIDIDQAQRVAKVAANFYDQVENEWHLEAISRDLLISACQLHEIGLSVDFKQAPQHAAYLVRNLDLPGFTPAQKKLLATLLLNQTNPVDLSSLHQQNAVPPRVAEQLCRLLRLAIIFASRRRDDLVPEMTLQANHELLTLTLPQGWLTQHPLGKEIIDQESQWQSYVHWPLEVH</sequence>
<dbReference type="EC" id="3.6.1.40" evidence="1"/>
<dbReference type="EMBL" id="AE014075">
    <property type="protein sequence ID" value="AAN83131.1"/>
    <property type="status" value="ALT_INIT"/>
    <property type="molecule type" value="Genomic_DNA"/>
</dbReference>
<dbReference type="RefSeq" id="WP_000535977.1">
    <property type="nucleotide sequence ID" value="NZ_CP051263.1"/>
</dbReference>
<dbReference type="SMR" id="Q8FBR0"/>
<dbReference type="STRING" id="199310.c4699"/>
<dbReference type="KEGG" id="ecc:c4699"/>
<dbReference type="eggNOG" id="COG0248">
    <property type="taxonomic scope" value="Bacteria"/>
</dbReference>
<dbReference type="HOGENOM" id="CLU_025908_4_0_6"/>
<dbReference type="UniPathway" id="UPA00908">
    <property type="reaction ID" value="UER00885"/>
</dbReference>
<dbReference type="Proteomes" id="UP000001410">
    <property type="component" value="Chromosome"/>
</dbReference>
<dbReference type="GO" id="GO:0008894">
    <property type="term" value="F:guanosine-5'-triphosphate,3'-diphosphate diphosphatase activity"/>
    <property type="evidence" value="ECO:0007669"/>
    <property type="project" value="UniProtKB-UniRule"/>
</dbReference>
<dbReference type="GO" id="GO:0015974">
    <property type="term" value="P:guanosine pentaphosphate catabolic process"/>
    <property type="evidence" value="ECO:0007669"/>
    <property type="project" value="InterPro"/>
</dbReference>
<dbReference type="GO" id="GO:0015970">
    <property type="term" value="P:guanosine tetraphosphate biosynthetic process"/>
    <property type="evidence" value="ECO:0007669"/>
    <property type="project" value="UniProtKB-UniRule"/>
</dbReference>
<dbReference type="GO" id="GO:0015949">
    <property type="term" value="P:nucleobase-containing small molecule interconversion"/>
    <property type="evidence" value="ECO:0007669"/>
    <property type="project" value="TreeGrafter"/>
</dbReference>
<dbReference type="CDD" id="cd24117">
    <property type="entry name" value="ASKHA_NBD_EcGppA-like"/>
    <property type="match status" value="1"/>
</dbReference>
<dbReference type="FunFam" id="1.10.3210.10:FF:000004">
    <property type="entry name" value="Guanosine-5'-triphosphate,3'-diphosphate pyrophosphatase"/>
    <property type="match status" value="1"/>
</dbReference>
<dbReference type="FunFam" id="3.30.420.150:FF:000001">
    <property type="entry name" value="Guanosine-5'-triphosphate,3'-diphosphate pyrophosphatase"/>
    <property type="match status" value="1"/>
</dbReference>
<dbReference type="FunFam" id="3.30.420.40:FF:000023">
    <property type="entry name" value="Guanosine-5'-triphosphate,3'-diphosphate pyrophosphatase"/>
    <property type="match status" value="1"/>
</dbReference>
<dbReference type="Gene3D" id="3.30.420.40">
    <property type="match status" value="1"/>
</dbReference>
<dbReference type="Gene3D" id="3.30.420.150">
    <property type="entry name" value="Exopolyphosphatase. Domain 2"/>
    <property type="match status" value="1"/>
</dbReference>
<dbReference type="Gene3D" id="1.10.3210.10">
    <property type="entry name" value="Hypothetical protein af1432"/>
    <property type="match status" value="1"/>
</dbReference>
<dbReference type="HAMAP" id="MF_01550">
    <property type="entry name" value="GppA"/>
    <property type="match status" value="1"/>
</dbReference>
<dbReference type="InterPro" id="IPR043129">
    <property type="entry name" value="ATPase_NBD"/>
</dbReference>
<dbReference type="InterPro" id="IPR050273">
    <property type="entry name" value="GppA/Ppx_hydrolase"/>
</dbReference>
<dbReference type="InterPro" id="IPR023709">
    <property type="entry name" value="Guo-5TP_3DP_PyrP"/>
</dbReference>
<dbReference type="InterPro" id="IPR048950">
    <property type="entry name" value="Ppx_GppA_C"/>
</dbReference>
<dbReference type="InterPro" id="IPR003695">
    <property type="entry name" value="Ppx_GppA_N"/>
</dbReference>
<dbReference type="InterPro" id="IPR030673">
    <property type="entry name" value="PyroPPase_GppA_Ppx"/>
</dbReference>
<dbReference type="NCBIfam" id="NF008260">
    <property type="entry name" value="PRK11031.1"/>
    <property type="match status" value="1"/>
</dbReference>
<dbReference type="PANTHER" id="PTHR30005">
    <property type="entry name" value="EXOPOLYPHOSPHATASE"/>
    <property type="match status" value="1"/>
</dbReference>
<dbReference type="PANTHER" id="PTHR30005:SF0">
    <property type="entry name" value="RETROGRADE REGULATION PROTEIN 2"/>
    <property type="match status" value="1"/>
</dbReference>
<dbReference type="Pfam" id="PF02541">
    <property type="entry name" value="Ppx-GppA"/>
    <property type="match status" value="1"/>
</dbReference>
<dbReference type="Pfam" id="PF21447">
    <property type="entry name" value="Ppx-GppA_III"/>
    <property type="match status" value="1"/>
</dbReference>
<dbReference type="PIRSF" id="PIRSF001267">
    <property type="entry name" value="Pyrophosphatase_GppA_Ppx"/>
    <property type="match status" value="1"/>
</dbReference>
<dbReference type="SUPFAM" id="SSF53067">
    <property type="entry name" value="Actin-like ATPase domain"/>
    <property type="match status" value="2"/>
</dbReference>
<dbReference type="SUPFAM" id="SSF109604">
    <property type="entry name" value="HD-domain/PDEase-like"/>
    <property type="match status" value="1"/>
</dbReference>
<comment type="function">
    <text evidence="1">Catalyzes the conversion of pppGpp to ppGpp. Guanosine pentaphosphate (pppGpp) is a cytoplasmic signaling molecule which together with ppGpp controls the 'stringent response', an adaptive process that allows bacteria to respond to amino acid starvation, resulting in the coordinated regulation of numerous cellular activities.</text>
</comment>
<comment type="catalytic activity">
    <reaction evidence="1">
        <text>guanosine 3'-diphosphate 5'-triphosphate + H2O = guanosine 3',5'-bis(diphosphate) + phosphate + H(+)</text>
        <dbReference type="Rhea" id="RHEA:13073"/>
        <dbReference type="ChEBI" id="CHEBI:15377"/>
        <dbReference type="ChEBI" id="CHEBI:15378"/>
        <dbReference type="ChEBI" id="CHEBI:43474"/>
        <dbReference type="ChEBI" id="CHEBI:77828"/>
        <dbReference type="ChEBI" id="CHEBI:142410"/>
        <dbReference type="EC" id="3.6.1.40"/>
    </reaction>
</comment>
<comment type="pathway">
    <text evidence="1">Purine metabolism; ppGpp biosynthesis; ppGpp from GTP: step 2/2.</text>
</comment>
<comment type="similarity">
    <text evidence="1">Belongs to the GppA/Ppx family. GppA subfamily.</text>
</comment>
<comment type="sequence caution" evidence="2">
    <conflict type="erroneous initiation">
        <sequence resource="EMBL-CDS" id="AAN83131"/>
    </conflict>
</comment>
<proteinExistence type="inferred from homology"/>
<accession>Q8FBR0</accession>
<keyword id="KW-0378">Hydrolase</keyword>
<keyword id="KW-1185">Reference proteome</keyword>
<name>GPPA_ECOL6</name>
<organism>
    <name type="scientific">Escherichia coli O6:H1 (strain CFT073 / ATCC 700928 / UPEC)</name>
    <dbReference type="NCBI Taxonomy" id="199310"/>
    <lineage>
        <taxon>Bacteria</taxon>
        <taxon>Pseudomonadati</taxon>
        <taxon>Pseudomonadota</taxon>
        <taxon>Gammaproteobacteria</taxon>
        <taxon>Enterobacterales</taxon>
        <taxon>Enterobacteriaceae</taxon>
        <taxon>Escherichia</taxon>
    </lineage>
</organism>
<evidence type="ECO:0000255" key="1">
    <source>
        <dbReference type="HAMAP-Rule" id="MF_01550"/>
    </source>
</evidence>
<evidence type="ECO:0000305" key="2"/>
<feature type="chain" id="PRO_0000194282" description="Guanosine-5'-triphosphate,3'-diphosphate pyrophosphatase">
    <location>
        <begin position="1"/>
        <end position="494"/>
    </location>
</feature>
<reference key="1">
    <citation type="journal article" date="2002" name="Proc. Natl. Acad. Sci. U.S.A.">
        <title>Extensive mosaic structure revealed by the complete genome sequence of uropathogenic Escherichia coli.</title>
        <authorList>
            <person name="Welch R.A."/>
            <person name="Burland V."/>
            <person name="Plunkett G. III"/>
            <person name="Redford P."/>
            <person name="Roesch P."/>
            <person name="Rasko D."/>
            <person name="Buckles E.L."/>
            <person name="Liou S.-R."/>
            <person name="Boutin A."/>
            <person name="Hackett J."/>
            <person name="Stroud D."/>
            <person name="Mayhew G.F."/>
            <person name="Rose D.J."/>
            <person name="Zhou S."/>
            <person name="Schwartz D.C."/>
            <person name="Perna N.T."/>
            <person name="Mobley H.L.T."/>
            <person name="Donnenberg M.S."/>
            <person name="Blattner F.R."/>
        </authorList>
    </citation>
    <scope>NUCLEOTIDE SEQUENCE [LARGE SCALE GENOMIC DNA]</scope>
    <source>
        <strain>CFT073 / ATCC 700928 / UPEC</strain>
    </source>
</reference>
<gene>
    <name evidence="1" type="primary">gppA</name>
    <name type="ordered locus">c4699</name>
</gene>
<protein>
    <recommendedName>
        <fullName evidence="1">Guanosine-5'-triphosphate,3'-diphosphate pyrophosphatase</fullName>
        <ecNumber evidence="1">3.6.1.40</ecNumber>
    </recommendedName>
    <alternativeName>
        <fullName evidence="1">Guanosine pentaphosphate phosphohydrolase</fullName>
    </alternativeName>
    <alternativeName>
        <fullName evidence="1">pppGpp-5'-phosphohydrolase</fullName>
    </alternativeName>
</protein>